<sequence length="300" mass="31736">MKIQCAIIGSGNIGTDLMAKLQRSPVLEPAWMVGIDPDSDGLARARAAGLKTTHEGVDGLLPHIEGDGVRIAFDATSAYVHAENDRKLQEKGVMVIDLTPAAIGPFCVPPVNLKDRIGDGATNVNMVTCGGQATVPIVAAVSQVQPVDYAEIVATISSRSAGPGTRKNIDEFTRTTSRAIEQVGGAKQGKAIIILNPAEPPLIMRDTVHCLVQGKPDHKAITESIERMVAEVQRYVPGYRIKNGPTFDGQRVSTFLEVEGLGDYLPHYSGNLDIMTAAAARAAEIFAESLQSASDAPATA</sequence>
<proteinExistence type="inferred from homology"/>
<dbReference type="EC" id="1.2.1.10" evidence="1"/>
<dbReference type="EMBL" id="CP000453">
    <property type="protein sequence ID" value="ABI57801.1"/>
    <property type="molecule type" value="Genomic_DNA"/>
</dbReference>
<dbReference type="RefSeq" id="WP_011630194.1">
    <property type="nucleotide sequence ID" value="NC_008340.1"/>
</dbReference>
<dbReference type="SMR" id="Q0A5T6"/>
<dbReference type="KEGG" id="aeh:Mlg_2461"/>
<dbReference type="eggNOG" id="COG4569">
    <property type="taxonomic scope" value="Bacteria"/>
</dbReference>
<dbReference type="HOGENOM" id="CLU_062208_0_0_6"/>
<dbReference type="OrthoDB" id="9786743at2"/>
<dbReference type="Proteomes" id="UP000001962">
    <property type="component" value="Chromosome"/>
</dbReference>
<dbReference type="GO" id="GO:0008774">
    <property type="term" value="F:acetaldehyde dehydrogenase (acetylating) activity"/>
    <property type="evidence" value="ECO:0007669"/>
    <property type="project" value="UniProtKB-UniRule"/>
</dbReference>
<dbReference type="GO" id="GO:0051287">
    <property type="term" value="F:NAD binding"/>
    <property type="evidence" value="ECO:0007669"/>
    <property type="project" value="UniProtKB-UniRule"/>
</dbReference>
<dbReference type="GO" id="GO:0009056">
    <property type="term" value="P:catabolic process"/>
    <property type="evidence" value="ECO:0007669"/>
    <property type="project" value="UniProtKB-KW"/>
</dbReference>
<dbReference type="CDD" id="cd23933">
    <property type="entry name" value="ALDH_C"/>
    <property type="match status" value="1"/>
</dbReference>
<dbReference type="Gene3D" id="3.30.360.10">
    <property type="entry name" value="Dihydrodipicolinate Reductase, domain 2"/>
    <property type="match status" value="1"/>
</dbReference>
<dbReference type="Gene3D" id="3.40.50.720">
    <property type="entry name" value="NAD(P)-binding Rossmann-like Domain"/>
    <property type="match status" value="1"/>
</dbReference>
<dbReference type="HAMAP" id="MF_01657">
    <property type="entry name" value="Ac_ald_DH_ac"/>
    <property type="match status" value="1"/>
</dbReference>
<dbReference type="InterPro" id="IPR003361">
    <property type="entry name" value="Acetaldehyde_dehydrogenase"/>
</dbReference>
<dbReference type="InterPro" id="IPR015426">
    <property type="entry name" value="Acetylaldehyde_DH_C"/>
</dbReference>
<dbReference type="InterPro" id="IPR036291">
    <property type="entry name" value="NAD(P)-bd_dom_sf"/>
</dbReference>
<dbReference type="InterPro" id="IPR000534">
    <property type="entry name" value="Semialdehyde_DH_NAD-bd"/>
</dbReference>
<dbReference type="NCBIfam" id="TIGR03215">
    <property type="entry name" value="ac_ald_DH_ac"/>
    <property type="match status" value="1"/>
</dbReference>
<dbReference type="NCBIfam" id="NF006157">
    <property type="entry name" value="PRK08300.1"/>
    <property type="match status" value="1"/>
</dbReference>
<dbReference type="Pfam" id="PF09290">
    <property type="entry name" value="AcetDehyd-dimer"/>
    <property type="match status" value="1"/>
</dbReference>
<dbReference type="Pfam" id="PF01118">
    <property type="entry name" value="Semialdhyde_dh"/>
    <property type="match status" value="1"/>
</dbReference>
<dbReference type="PIRSF" id="PIRSF015689">
    <property type="entry name" value="Actaldh_dh_actl"/>
    <property type="match status" value="1"/>
</dbReference>
<dbReference type="SMART" id="SM00859">
    <property type="entry name" value="Semialdhyde_dh"/>
    <property type="match status" value="1"/>
</dbReference>
<dbReference type="SUPFAM" id="SSF55347">
    <property type="entry name" value="Glyceraldehyde-3-phosphate dehydrogenase-like, C-terminal domain"/>
    <property type="match status" value="1"/>
</dbReference>
<dbReference type="SUPFAM" id="SSF51735">
    <property type="entry name" value="NAD(P)-binding Rossmann-fold domains"/>
    <property type="match status" value="1"/>
</dbReference>
<protein>
    <recommendedName>
        <fullName evidence="1">Acetaldehyde dehydrogenase</fullName>
        <ecNumber evidence="1">1.2.1.10</ecNumber>
    </recommendedName>
    <alternativeName>
        <fullName evidence="1">Acetaldehyde dehydrogenase [acetylating]</fullName>
    </alternativeName>
</protein>
<reference key="1">
    <citation type="submission" date="2006-08" db="EMBL/GenBank/DDBJ databases">
        <title>Complete sequence of Alkalilimnicola ehrilichei MLHE-1.</title>
        <authorList>
            <person name="Copeland A."/>
            <person name="Lucas S."/>
            <person name="Lapidus A."/>
            <person name="Barry K."/>
            <person name="Detter J.C."/>
            <person name="Glavina del Rio T."/>
            <person name="Hammon N."/>
            <person name="Israni S."/>
            <person name="Dalin E."/>
            <person name="Tice H."/>
            <person name="Pitluck S."/>
            <person name="Sims D."/>
            <person name="Brettin T."/>
            <person name="Bruce D."/>
            <person name="Han C."/>
            <person name="Tapia R."/>
            <person name="Gilna P."/>
            <person name="Schmutz J."/>
            <person name="Larimer F."/>
            <person name="Land M."/>
            <person name="Hauser L."/>
            <person name="Kyrpides N."/>
            <person name="Mikhailova N."/>
            <person name="Oremland R.S."/>
            <person name="Hoeft S.E."/>
            <person name="Switzer-Blum J."/>
            <person name="Kulp T."/>
            <person name="King G."/>
            <person name="Tabita R."/>
            <person name="Witte B."/>
            <person name="Santini J.M."/>
            <person name="Basu P."/>
            <person name="Hollibaugh J.T."/>
            <person name="Xie G."/>
            <person name="Stolz J.F."/>
            <person name="Richardson P."/>
        </authorList>
    </citation>
    <scope>NUCLEOTIDE SEQUENCE [LARGE SCALE GENOMIC DNA]</scope>
    <source>
        <strain>ATCC BAA-1101 / DSM 17681 / MLHE-1</strain>
    </source>
</reference>
<keyword id="KW-0058">Aromatic hydrocarbons catabolism</keyword>
<keyword id="KW-0520">NAD</keyword>
<keyword id="KW-0560">Oxidoreductase</keyword>
<keyword id="KW-1185">Reference proteome</keyword>
<comment type="catalytic activity">
    <reaction evidence="1">
        <text>acetaldehyde + NAD(+) + CoA = acetyl-CoA + NADH + H(+)</text>
        <dbReference type="Rhea" id="RHEA:23288"/>
        <dbReference type="ChEBI" id="CHEBI:15343"/>
        <dbReference type="ChEBI" id="CHEBI:15378"/>
        <dbReference type="ChEBI" id="CHEBI:57287"/>
        <dbReference type="ChEBI" id="CHEBI:57288"/>
        <dbReference type="ChEBI" id="CHEBI:57540"/>
        <dbReference type="ChEBI" id="CHEBI:57945"/>
        <dbReference type="EC" id="1.2.1.10"/>
    </reaction>
</comment>
<comment type="similarity">
    <text evidence="1">Belongs to the acetaldehyde dehydrogenase family.</text>
</comment>
<organism>
    <name type="scientific">Alkalilimnicola ehrlichii (strain ATCC BAA-1101 / DSM 17681 / MLHE-1)</name>
    <dbReference type="NCBI Taxonomy" id="187272"/>
    <lineage>
        <taxon>Bacteria</taxon>
        <taxon>Pseudomonadati</taxon>
        <taxon>Pseudomonadota</taxon>
        <taxon>Gammaproteobacteria</taxon>
        <taxon>Chromatiales</taxon>
        <taxon>Ectothiorhodospiraceae</taxon>
        <taxon>Alkalilimnicola</taxon>
    </lineage>
</organism>
<accession>Q0A5T6</accession>
<evidence type="ECO:0000255" key="1">
    <source>
        <dbReference type="HAMAP-Rule" id="MF_01657"/>
    </source>
</evidence>
<name>ACDH_ALKEH</name>
<gene>
    <name type="ordered locus">Mlg_2461</name>
</gene>
<feature type="chain" id="PRO_0000387616" description="Acetaldehyde dehydrogenase">
    <location>
        <begin position="1"/>
        <end position="300"/>
    </location>
</feature>
<feature type="active site" description="Acyl-thioester intermediate" evidence="1">
    <location>
        <position position="129"/>
    </location>
</feature>
<feature type="binding site" evidence="1">
    <location>
        <begin position="10"/>
        <end position="13"/>
    </location>
    <ligand>
        <name>NAD(+)</name>
        <dbReference type="ChEBI" id="CHEBI:57540"/>
    </ligand>
</feature>
<feature type="binding site" evidence="1">
    <location>
        <begin position="160"/>
        <end position="168"/>
    </location>
    <ligand>
        <name>NAD(+)</name>
        <dbReference type="ChEBI" id="CHEBI:57540"/>
    </ligand>
</feature>
<feature type="binding site" evidence="1">
    <location>
        <position position="271"/>
    </location>
    <ligand>
        <name>NAD(+)</name>
        <dbReference type="ChEBI" id="CHEBI:57540"/>
    </ligand>
</feature>